<accession>Q12151</accession>
<accession>D6VSJ7</accession>
<organism>
    <name type="scientific">Saccharomyces cerevisiae (strain ATCC 204508 / S288c)</name>
    <name type="common">Baker's yeast</name>
    <dbReference type="NCBI Taxonomy" id="559292"/>
    <lineage>
        <taxon>Eukaryota</taxon>
        <taxon>Fungi</taxon>
        <taxon>Dikarya</taxon>
        <taxon>Ascomycota</taxon>
        <taxon>Saccharomycotina</taxon>
        <taxon>Saccharomycetes</taxon>
        <taxon>Saccharomycetales</taxon>
        <taxon>Saccharomycetaceae</taxon>
        <taxon>Saccharomyces</taxon>
    </lineage>
</organism>
<dbReference type="EMBL" id="Z68194">
    <property type="protein sequence ID" value="CAA92356.1"/>
    <property type="molecule type" value="Genomic_DNA"/>
</dbReference>
<dbReference type="EMBL" id="Z68195">
    <property type="protein sequence ID" value="CAA92364.1"/>
    <property type="molecule type" value="Genomic_DNA"/>
</dbReference>
<dbReference type="EMBL" id="BK006938">
    <property type="protein sequence ID" value="DAA12057.1"/>
    <property type="molecule type" value="Genomic_DNA"/>
</dbReference>
<dbReference type="PIR" id="S61580">
    <property type="entry name" value="S61580"/>
</dbReference>
<dbReference type="RefSeq" id="NP_010499.1">
    <property type="nucleotide sequence ID" value="NM_001180521.1"/>
</dbReference>
<dbReference type="PDB" id="4N9N">
    <property type="method" value="X-ray"/>
    <property type="resolution" value="2.90 A"/>
    <property type="chains" value="A/B=598-714, A/B=726-878"/>
</dbReference>
<dbReference type="PDB" id="7XB5">
    <property type="method" value="X-ray"/>
    <property type="resolution" value="3.44 A"/>
    <property type="chains" value="A=602-714, A=726-897"/>
</dbReference>
<dbReference type="PDBsum" id="4N9N"/>
<dbReference type="PDBsum" id="7XB5"/>
<dbReference type="SMR" id="Q12151"/>
<dbReference type="BioGRID" id="32267">
    <property type="interactions" value="135"/>
</dbReference>
<dbReference type="DIP" id="DIP-6262N"/>
<dbReference type="FunCoup" id="Q12151">
    <property type="interactions" value="457"/>
</dbReference>
<dbReference type="IntAct" id="Q12151">
    <property type="interactions" value="1"/>
</dbReference>
<dbReference type="MINT" id="Q12151"/>
<dbReference type="STRING" id="4932.YDR213W"/>
<dbReference type="iPTMnet" id="Q12151"/>
<dbReference type="PaxDb" id="4932-YDR213W"/>
<dbReference type="PeptideAtlas" id="Q12151"/>
<dbReference type="EnsemblFungi" id="YDR213W_mRNA">
    <property type="protein sequence ID" value="YDR213W"/>
    <property type="gene ID" value="YDR213W"/>
</dbReference>
<dbReference type="GeneID" id="851799"/>
<dbReference type="KEGG" id="sce:YDR213W"/>
<dbReference type="AGR" id="SGD:S000002621"/>
<dbReference type="SGD" id="S000002621">
    <property type="gene designation" value="UPC2"/>
</dbReference>
<dbReference type="VEuPathDB" id="FungiDB:YDR213W"/>
<dbReference type="eggNOG" id="ENOG502QRM1">
    <property type="taxonomic scope" value="Eukaryota"/>
</dbReference>
<dbReference type="GeneTree" id="ENSGT00940000176420"/>
<dbReference type="HOGENOM" id="CLU_011669_0_0_1"/>
<dbReference type="InParanoid" id="Q12151"/>
<dbReference type="OMA" id="EVWPTIT"/>
<dbReference type="OrthoDB" id="416217at2759"/>
<dbReference type="BioCyc" id="YEAST:G3O-29795-MONOMER"/>
<dbReference type="BioGRID-ORCS" id="851799">
    <property type="hits" value="0 hits in 13 CRISPR screens"/>
</dbReference>
<dbReference type="EvolutionaryTrace" id="Q12151"/>
<dbReference type="PRO" id="PR:Q12151"/>
<dbReference type="Proteomes" id="UP000002311">
    <property type="component" value="Chromosome IV"/>
</dbReference>
<dbReference type="RNAct" id="Q12151">
    <property type="molecule type" value="protein"/>
</dbReference>
<dbReference type="GO" id="GO:0005737">
    <property type="term" value="C:cytoplasm"/>
    <property type="evidence" value="ECO:0007005"/>
    <property type="project" value="SGD"/>
</dbReference>
<dbReference type="GO" id="GO:0016020">
    <property type="term" value="C:membrane"/>
    <property type="evidence" value="ECO:0000314"/>
    <property type="project" value="SGD"/>
</dbReference>
<dbReference type="GO" id="GO:0005634">
    <property type="term" value="C:nucleus"/>
    <property type="evidence" value="ECO:0007669"/>
    <property type="project" value="UniProtKB-SubCell"/>
</dbReference>
<dbReference type="GO" id="GO:0048471">
    <property type="term" value="C:perinuclear region of cytoplasm"/>
    <property type="evidence" value="ECO:0000314"/>
    <property type="project" value="SGD"/>
</dbReference>
<dbReference type="GO" id="GO:0001228">
    <property type="term" value="F:DNA-binding transcription activator activity, RNA polymerase II-specific"/>
    <property type="evidence" value="ECO:0000314"/>
    <property type="project" value="SGD"/>
</dbReference>
<dbReference type="GO" id="GO:0000978">
    <property type="term" value="F:RNA polymerase II cis-regulatory region sequence-specific DNA binding"/>
    <property type="evidence" value="ECO:0000314"/>
    <property type="project" value="SGD"/>
</dbReference>
<dbReference type="GO" id="GO:0008270">
    <property type="term" value="F:zinc ion binding"/>
    <property type="evidence" value="ECO:0007669"/>
    <property type="project" value="InterPro"/>
</dbReference>
<dbReference type="GO" id="GO:0071456">
    <property type="term" value="P:cellular response to hypoxia"/>
    <property type="evidence" value="ECO:0000315"/>
    <property type="project" value="SGD"/>
</dbReference>
<dbReference type="GO" id="GO:0070452">
    <property type="term" value="P:positive regulation of ergosterol biosynthetic process"/>
    <property type="evidence" value="ECO:0000315"/>
    <property type="project" value="SGD"/>
</dbReference>
<dbReference type="GO" id="GO:1900436">
    <property type="term" value="P:positive regulation of filamentous growth of a population of unicellular organisms in response to starvation"/>
    <property type="evidence" value="ECO:0000315"/>
    <property type="project" value="SGD"/>
</dbReference>
<dbReference type="GO" id="GO:2000911">
    <property type="term" value="P:positive regulation of sterol import"/>
    <property type="evidence" value="ECO:0000315"/>
    <property type="project" value="SGD"/>
</dbReference>
<dbReference type="GO" id="GO:0045944">
    <property type="term" value="P:positive regulation of transcription by RNA polymerase II"/>
    <property type="evidence" value="ECO:0000315"/>
    <property type="project" value="SGD"/>
</dbReference>
<dbReference type="GO" id="GO:0006357">
    <property type="term" value="P:regulation of transcription by RNA polymerase II"/>
    <property type="evidence" value="ECO:0000318"/>
    <property type="project" value="GO_Central"/>
</dbReference>
<dbReference type="CDD" id="cd00067">
    <property type="entry name" value="GAL4"/>
    <property type="match status" value="1"/>
</dbReference>
<dbReference type="FunFam" id="4.10.240.10:FF:000022">
    <property type="entry name" value="Upc2p"/>
    <property type="match status" value="1"/>
</dbReference>
<dbReference type="Gene3D" id="4.10.240.10">
    <property type="entry name" value="Zn(2)-C6 fungal-type DNA-binding domain"/>
    <property type="match status" value="1"/>
</dbReference>
<dbReference type="InterPro" id="IPR021858">
    <property type="entry name" value="Fun_TF"/>
</dbReference>
<dbReference type="InterPro" id="IPR053157">
    <property type="entry name" value="Sterol_Uptake_Regulator"/>
</dbReference>
<dbReference type="InterPro" id="IPR036864">
    <property type="entry name" value="Zn2-C6_fun-type_DNA-bd_sf"/>
</dbReference>
<dbReference type="InterPro" id="IPR001138">
    <property type="entry name" value="Zn2Cys6_DnaBD"/>
</dbReference>
<dbReference type="PANTHER" id="PTHR47784">
    <property type="entry name" value="STEROL UPTAKE CONTROL PROTEIN 2"/>
    <property type="match status" value="1"/>
</dbReference>
<dbReference type="PANTHER" id="PTHR47784:SF5">
    <property type="entry name" value="STEROL UPTAKE CONTROL PROTEIN 2"/>
    <property type="match status" value="1"/>
</dbReference>
<dbReference type="Pfam" id="PF11951">
    <property type="entry name" value="Fungal_trans_2"/>
    <property type="match status" value="1"/>
</dbReference>
<dbReference type="Pfam" id="PF00172">
    <property type="entry name" value="Zn_clus"/>
    <property type="match status" value="1"/>
</dbReference>
<dbReference type="SMART" id="SM00066">
    <property type="entry name" value="GAL4"/>
    <property type="match status" value="1"/>
</dbReference>
<dbReference type="SUPFAM" id="SSF57701">
    <property type="entry name" value="Zn2/Cys6 DNA-binding domain"/>
    <property type="match status" value="1"/>
</dbReference>
<dbReference type="PROSITE" id="PS00463">
    <property type="entry name" value="ZN2_CY6_FUNGAL_1"/>
    <property type="match status" value="1"/>
</dbReference>
<dbReference type="PROSITE" id="PS50048">
    <property type="entry name" value="ZN2_CY6_FUNGAL_2"/>
    <property type="match status" value="1"/>
</dbReference>
<reference key="1">
    <citation type="journal article" date="1997" name="Nature">
        <title>The nucleotide sequence of Saccharomyces cerevisiae chromosome IV.</title>
        <authorList>
            <person name="Jacq C."/>
            <person name="Alt-Moerbe J."/>
            <person name="Andre B."/>
            <person name="Arnold W."/>
            <person name="Bahr A."/>
            <person name="Ballesta J.P.G."/>
            <person name="Bargues M."/>
            <person name="Baron L."/>
            <person name="Becker A."/>
            <person name="Biteau N."/>
            <person name="Bloecker H."/>
            <person name="Blugeon C."/>
            <person name="Boskovic J."/>
            <person name="Brandt P."/>
            <person name="Brueckner M."/>
            <person name="Buitrago M.J."/>
            <person name="Coster F."/>
            <person name="Delaveau T."/>
            <person name="del Rey F."/>
            <person name="Dujon B."/>
            <person name="Eide L.G."/>
            <person name="Garcia-Cantalejo J.M."/>
            <person name="Goffeau A."/>
            <person name="Gomez-Peris A."/>
            <person name="Granotier C."/>
            <person name="Hanemann V."/>
            <person name="Hankeln T."/>
            <person name="Hoheisel J.D."/>
            <person name="Jaeger W."/>
            <person name="Jimenez A."/>
            <person name="Jonniaux J.-L."/>
            <person name="Kraemer C."/>
            <person name="Kuester H."/>
            <person name="Laamanen P."/>
            <person name="Legros Y."/>
            <person name="Louis E.J."/>
            <person name="Moeller-Rieker S."/>
            <person name="Monnet A."/>
            <person name="Moro M."/>
            <person name="Mueller-Auer S."/>
            <person name="Nussbaumer B."/>
            <person name="Paricio N."/>
            <person name="Paulin L."/>
            <person name="Perea J."/>
            <person name="Perez-Alonso M."/>
            <person name="Perez-Ortin J.E."/>
            <person name="Pohl T.M."/>
            <person name="Prydz H."/>
            <person name="Purnelle B."/>
            <person name="Rasmussen S.W."/>
            <person name="Remacha M.A."/>
            <person name="Revuelta J.L."/>
            <person name="Rieger M."/>
            <person name="Salom D."/>
            <person name="Saluz H.P."/>
            <person name="Saiz J.E."/>
            <person name="Saren A.-M."/>
            <person name="Schaefer M."/>
            <person name="Scharfe M."/>
            <person name="Schmidt E.R."/>
            <person name="Schneider C."/>
            <person name="Scholler P."/>
            <person name="Schwarz S."/>
            <person name="Soler-Mira A."/>
            <person name="Urrestarazu L.A."/>
            <person name="Verhasselt P."/>
            <person name="Vissers S."/>
            <person name="Voet M."/>
            <person name="Volckaert G."/>
            <person name="Wagner G."/>
            <person name="Wambutt R."/>
            <person name="Wedler E."/>
            <person name="Wedler H."/>
            <person name="Woelfl S."/>
            <person name="Harris D.E."/>
            <person name="Bowman S."/>
            <person name="Brown D."/>
            <person name="Churcher C.M."/>
            <person name="Connor R."/>
            <person name="Dedman K."/>
            <person name="Gentles S."/>
            <person name="Hamlin N."/>
            <person name="Hunt S."/>
            <person name="Jones L."/>
            <person name="McDonald S."/>
            <person name="Murphy L.D."/>
            <person name="Niblett D."/>
            <person name="Odell C."/>
            <person name="Oliver K."/>
            <person name="Rajandream M.A."/>
            <person name="Richards C."/>
            <person name="Shore L."/>
            <person name="Walsh S.V."/>
            <person name="Barrell B.G."/>
            <person name="Dietrich F.S."/>
            <person name="Mulligan J.T."/>
            <person name="Allen E."/>
            <person name="Araujo R."/>
            <person name="Aviles E."/>
            <person name="Berno A."/>
            <person name="Carpenter J."/>
            <person name="Chen E."/>
            <person name="Cherry J.M."/>
            <person name="Chung E."/>
            <person name="Duncan M."/>
            <person name="Hunicke-Smith S."/>
            <person name="Hyman R.W."/>
            <person name="Komp C."/>
            <person name="Lashkari D."/>
            <person name="Lew H."/>
            <person name="Lin D."/>
            <person name="Mosedale D."/>
            <person name="Nakahara K."/>
            <person name="Namath A."/>
            <person name="Oefner P."/>
            <person name="Oh C."/>
            <person name="Petel F.X."/>
            <person name="Roberts D."/>
            <person name="Schramm S."/>
            <person name="Schroeder M."/>
            <person name="Shogren T."/>
            <person name="Shroff N."/>
            <person name="Winant A."/>
            <person name="Yelton M.A."/>
            <person name="Botstein D."/>
            <person name="Davis R.W."/>
            <person name="Johnston M."/>
            <person name="Andrews S."/>
            <person name="Brinkman R."/>
            <person name="Cooper J."/>
            <person name="Ding H."/>
            <person name="Du Z."/>
            <person name="Favello A."/>
            <person name="Fulton L."/>
            <person name="Gattung S."/>
            <person name="Greco T."/>
            <person name="Hallsworth K."/>
            <person name="Hawkins J."/>
            <person name="Hillier L.W."/>
            <person name="Jier M."/>
            <person name="Johnson D."/>
            <person name="Johnston L."/>
            <person name="Kirsten J."/>
            <person name="Kucaba T."/>
            <person name="Langston Y."/>
            <person name="Latreille P."/>
            <person name="Le T."/>
            <person name="Mardis E."/>
            <person name="Menezes S."/>
            <person name="Miller N."/>
            <person name="Nhan M."/>
            <person name="Pauley A."/>
            <person name="Peluso D."/>
            <person name="Rifkin L."/>
            <person name="Riles L."/>
            <person name="Taich A."/>
            <person name="Trevaskis E."/>
            <person name="Vignati D."/>
            <person name="Wilcox L."/>
            <person name="Wohldman P."/>
            <person name="Vaudin M."/>
            <person name="Wilson R."/>
            <person name="Waterston R."/>
            <person name="Albermann K."/>
            <person name="Hani J."/>
            <person name="Heumann K."/>
            <person name="Kleine K."/>
            <person name="Mewes H.-W."/>
            <person name="Zollner A."/>
            <person name="Zaccaria P."/>
        </authorList>
    </citation>
    <scope>NUCLEOTIDE SEQUENCE [LARGE SCALE GENOMIC DNA]</scope>
    <source>
        <strain>ATCC 204508 / S288c</strain>
    </source>
</reference>
<reference key="2">
    <citation type="journal article" date="2014" name="G3 (Bethesda)">
        <title>The reference genome sequence of Saccharomyces cerevisiae: Then and now.</title>
        <authorList>
            <person name="Engel S.R."/>
            <person name="Dietrich F.S."/>
            <person name="Fisk D.G."/>
            <person name="Binkley G."/>
            <person name="Balakrishnan R."/>
            <person name="Costanzo M.C."/>
            <person name="Dwight S.S."/>
            <person name="Hitz B.C."/>
            <person name="Karra K."/>
            <person name="Nash R.S."/>
            <person name="Weng S."/>
            <person name="Wong E.D."/>
            <person name="Lloyd P."/>
            <person name="Skrzypek M.S."/>
            <person name="Miyasato S.R."/>
            <person name="Simison M."/>
            <person name="Cherry J.M."/>
        </authorList>
    </citation>
    <scope>GENOME REANNOTATION</scope>
    <source>
        <strain>ATCC 204508 / S288c</strain>
    </source>
</reference>
<reference key="3">
    <citation type="journal article" date="1988" name="Yeast">
        <title>Pleiotropic mutations in Saccharomyces cerevisiae affecting sterol uptake and metabolism.</title>
        <authorList>
            <person name="Lewis T.L."/>
            <person name="Keesler G.A."/>
            <person name="Fenner G.P."/>
            <person name="Parks L.W."/>
        </authorList>
    </citation>
    <scope>MUTAGENESIS OF GLY-888</scope>
</reference>
<reference key="4">
    <citation type="journal article" date="1998" name="J. Bacteriol.">
        <title>A mutation in a purported regulatory gene affects control of sterol uptake in Saccharomyces cerevisiae.</title>
        <authorList>
            <person name="Crowley J.H."/>
            <person name="Leak F.W. Jr."/>
            <person name="Shianna K.V."/>
            <person name="Tove S."/>
            <person name="Parks L.W."/>
        </authorList>
    </citation>
    <scope>MUTAGENESIS OF GLY-888</scope>
</reference>
<reference key="5">
    <citation type="journal article" date="2001" name="Genetics">
        <title>Regulatory mechanisms controlling expression of the DAN/TIR mannoprotein genes during anaerobic remodeling of the cell wall in Saccharomyces cerevisiae.</title>
        <authorList>
            <person name="Abramova N.E."/>
            <person name="Cohen B.D."/>
            <person name="Sertil O."/>
            <person name="Kapoor R."/>
            <person name="Davies K.J."/>
            <person name="Lowry C.V."/>
        </authorList>
    </citation>
    <scope>FUNCTION</scope>
    <scope>INDUCTION</scope>
    <scope>MUTAGENESIS OF GLY-888</scope>
</reference>
<reference key="6">
    <citation type="journal article" date="2001" name="J. Bacteriol.">
        <title>Reciprocal regulation of anaerobic and aerobic cell wall mannoprotein gene expression in Saccharomyces cerevisiae.</title>
        <authorList>
            <person name="Abramova N.E."/>
            <person name="Sertil O."/>
            <person name="Mehta S."/>
            <person name="Lowry C.V."/>
        </authorList>
    </citation>
    <scope>FUNCTION</scope>
</reference>
<reference key="7">
    <citation type="journal article" date="2001" name="Mol. Cell. Biol.">
        <title>Upc2p and Ecm22p, dual regulators of sterol biosynthesis in Saccharomyces cerevisiae.</title>
        <authorList>
            <person name="Vik A."/>
            <person name="Rine J."/>
        </authorList>
    </citation>
    <scope>FUNCTION</scope>
</reference>
<reference key="8">
    <citation type="journal article" date="2002" name="J. Biol. Chem.">
        <title>Transcriptional profiling identifies two members of the ATP-binding cassette transporter superfamily required for sterol uptake in yeast.</title>
        <authorList>
            <person name="Wilcox L.J."/>
            <person name="Balderes D.A."/>
            <person name="Wharton B."/>
            <person name="Tinkelenberg A.H."/>
            <person name="Rao G."/>
            <person name="Sturley S.L."/>
        </authorList>
    </citation>
    <scope>FUNCTION</scope>
</reference>
<reference key="9">
    <citation type="journal article" date="2003" name="Nature">
        <title>Global analysis of protein localization in budding yeast.</title>
        <authorList>
            <person name="Huh W.-K."/>
            <person name="Falvo J.V."/>
            <person name="Gerke L.C."/>
            <person name="Carroll A.S."/>
            <person name="Howson R.W."/>
            <person name="Weissman J.S."/>
            <person name="O'Shea E.K."/>
        </authorList>
    </citation>
    <scope>SUBCELLULAR LOCATION [LARGE SCALE ANALYSIS]</scope>
</reference>
<reference key="10">
    <citation type="journal article" date="2003" name="Nature">
        <title>Global analysis of protein expression in yeast.</title>
        <authorList>
            <person name="Ghaemmaghami S."/>
            <person name="Huh W.-K."/>
            <person name="Bower K."/>
            <person name="Howson R.W."/>
            <person name="Belle A."/>
            <person name="Dephoure N."/>
            <person name="O'Shea E.K."/>
            <person name="Weissman J.S."/>
        </authorList>
    </citation>
    <scope>LEVEL OF PROTEIN EXPRESSION [LARGE SCALE ANALYSIS]</scope>
</reference>
<reference key="11">
    <citation type="journal article" date="2003" name="Yeast">
        <title>Transcriptional regulation of YML083c under aerobic and anaerobic conditions.</title>
        <authorList>
            <person name="Ter Linde J.J."/>
            <person name="Regnacq M."/>
            <person name="Steensma H.Y."/>
        </authorList>
    </citation>
    <scope>FUNCTION</scope>
</reference>
<reference key="12">
    <citation type="journal article" date="2008" name="Mol. Cell. Proteomics">
        <title>A multidimensional chromatography technology for in-depth phosphoproteome analysis.</title>
        <authorList>
            <person name="Albuquerque C.P."/>
            <person name="Smolka M.B."/>
            <person name="Payne S.H."/>
            <person name="Bafna V."/>
            <person name="Eng J."/>
            <person name="Zhou H."/>
        </authorList>
    </citation>
    <scope>PHOSPHORYLATION [LARGE SCALE ANALYSIS] AT THR-122</scope>
    <scope>IDENTIFICATION BY MASS SPECTROMETRY [LARGE SCALE ANALYSIS]</scope>
</reference>
<reference key="13">
    <citation type="journal article" date="2009" name="Science">
        <title>Global analysis of Cdk1 substrate phosphorylation sites provides insights into evolution.</title>
        <authorList>
            <person name="Holt L.J."/>
            <person name="Tuch B.B."/>
            <person name="Villen J."/>
            <person name="Johnson A.D."/>
            <person name="Gygi S.P."/>
            <person name="Morgan D.O."/>
        </authorList>
    </citation>
    <scope>PHOSPHORYLATION [LARGE SCALE ANALYSIS] AT THR-122 AND SER-519</scope>
    <scope>IDENTIFICATION BY MASS SPECTROMETRY [LARGE SCALE ANALYSIS]</scope>
</reference>
<gene>
    <name type="primary">UPC2</name>
    <name type="synonym">MOX4</name>
    <name type="ordered locus">YDR213W</name>
    <name type="ORF">YD8142.14</name>
    <name type="ORF">YD8142B.05</name>
</gene>
<protein>
    <recommendedName>
        <fullName>Sterol uptake control protein 2</fullName>
    </recommendedName>
    <alternativeName>
        <fullName>Mannoprotein regulation by oxygen protein 4</fullName>
    </alternativeName>
</protein>
<sequence length="913" mass="100340">MSEVGIQNHKKAVTKPRRREKVIELIEVDGKKVSTTSTGKRKFHNKSKNGCDNCKRRRVKCDEGKPACRKCTNMKLECQYTPIHLRKGRGATVVKYVTRKADGSVESDSSVDLPPTIKKEQTPFNDIQSAVKASGSSNDSFPSSASTTKSESEEKSSAPIEDKNNMTPLSMGLQGTINKKDMMNNFFSQNGTIGFGSPERLNSGIDGLLLPPLPSGNMGAFQLQQQQQVQQQSQPQTQAQQASGTPNERYGSFDLAGSPALQSTGMSLSNSLSGMLLCNRIPSGQNYTQQQLQYQLHQQLQLQQHQQVQLQQYQQLRQEQHQQVQQQQQEQLQQYQQHFLQQQQQVLLQQEQQPNDEEGGVQEENSKKVKEGPLQSQTSETTLNSDAATLQADALSQLSKMGLSLKSLSTFPTAGIGGVSYDFQELLGIKFPINNGNSRATKASNAEEALANMQEHHERAAASVKENDGQLSDTKSPAPSNNAQGGSASIMEPQAADAVSTMAPISMIERNMNRNSNISPSTPSAVLNDRQEMQDSISSLGNLTKAALENNEPTISLQTSQTENEDDASRQDMTSKINNEADRSSVSAGTSNIAKLLDLSTKGNLNLIDMKLFHHYCTKVWPTITAAKVSGPEIWRDYIPELAFDYPFLMHALLAFSATHLSRTETGLEQYVSSHRLDALRLLREAVLEISENNTDALVASALILIMDSLANASGNGTVGNQSLNSMSPSAWIFHVKGAATILTAVWPLSERSKFHNIISVDLSDLGDVINPDVGTITELVCFDESIADLYPVGLDSPYLITLAYLDKLHREKNQGDFILRVFTFPALLDKTFLALLMTGDLGAMRIMRSYYKLLRGFATEVKDKVWFLEGVTQVLPQDVDEYSGGGGMHMMLDFLGGGLPSMTTTNFSDFSL</sequence>
<feature type="chain" id="PRO_0000114988" description="Sterol uptake control protein 2">
    <location>
        <begin position="1"/>
        <end position="913"/>
    </location>
</feature>
<feature type="DNA-binding region" description="Zn(2)-C6 fungal-type" evidence="2">
    <location>
        <begin position="50"/>
        <end position="80"/>
    </location>
</feature>
<feature type="region of interest" description="Disordered" evidence="3">
    <location>
        <begin position="103"/>
        <end position="173"/>
    </location>
</feature>
<feature type="region of interest" description="Disordered" evidence="3">
    <location>
        <begin position="216"/>
        <end position="258"/>
    </location>
</feature>
<feature type="region of interest" description="Disordered" evidence="3">
    <location>
        <begin position="347"/>
        <end position="385"/>
    </location>
</feature>
<feature type="region of interest" description="Disordered" evidence="3">
    <location>
        <begin position="453"/>
        <end position="489"/>
    </location>
</feature>
<feature type="region of interest" description="Disordered" evidence="3">
    <location>
        <begin position="552"/>
        <end position="571"/>
    </location>
</feature>
<feature type="coiled-coil region" evidence="1">
    <location>
        <begin position="303"/>
        <end position="346"/>
    </location>
</feature>
<feature type="coiled-coil region" evidence="1">
    <location>
        <begin position="440"/>
        <end position="472"/>
    </location>
</feature>
<feature type="compositionally biased region" description="Basic and acidic residues" evidence="3">
    <location>
        <begin position="150"/>
        <end position="164"/>
    </location>
</feature>
<feature type="compositionally biased region" description="Low complexity" evidence="3">
    <location>
        <begin position="222"/>
        <end position="241"/>
    </location>
</feature>
<feature type="compositionally biased region" description="Polar residues" evidence="3">
    <location>
        <begin position="374"/>
        <end position="385"/>
    </location>
</feature>
<feature type="compositionally biased region" description="Basic and acidic residues" evidence="3">
    <location>
        <begin position="454"/>
        <end position="468"/>
    </location>
</feature>
<feature type="compositionally biased region" description="Polar residues" evidence="3">
    <location>
        <begin position="469"/>
        <end position="487"/>
    </location>
</feature>
<feature type="compositionally biased region" description="Polar residues" evidence="3">
    <location>
        <begin position="552"/>
        <end position="562"/>
    </location>
</feature>
<feature type="modified residue" description="Phosphothreonine" evidence="13 14">
    <location>
        <position position="122"/>
    </location>
</feature>
<feature type="modified residue" description="Phosphoserine" evidence="14">
    <location>
        <position position="519"/>
    </location>
</feature>
<feature type="mutagenesis site" description="Increased aerobic expression of DAN1." evidence="4 11 12">
    <original>G</original>
    <variation>A</variation>
    <location>
        <position position="888"/>
    </location>
</feature>
<feature type="mutagenesis site" description="In upc2-1; increases aerobic sterol synthesis and uptake. Also increases aerobic expression of DAN1 and sensibility to NaCl and LiCl." evidence="4 11 12">
    <original>G</original>
    <variation>D</variation>
    <location>
        <position position="888"/>
    </location>
</feature>
<feature type="helix" evidence="15">
    <location>
        <begin position="607"/>
        <end position="618"/>
    </location>
</feature>
<feature type="helix" evidence="15">
    <location>
        <begin position="621"/>
        <end position="626"/>
    </location>
</feature>
<feature type="strand" evidence="16">
    <location>
        <begin position="628"/>
        <end position="631"/>
    </location>
</feature>
<feature type="helix" evidence="15">
    <location>
        <begin position="632"/>
        <end position="636"/>
    </location>
</feature>
<feature type="helix" evidence="15">
    <location>
        <begin position="638"/>
        <end position="645"/>
    </location>
</feature>
<feature type="helix" evidence="15">
    <location>
        <begin position="647"/>
        <end position="661"/>
    </location>
</feature>
<feature type="helix" evidence="15">
    <location>
        <begin position="670"/>
        <end position="686"/>
    </location>
</feature>
<feature type="helix" evidence="15">
    <location>
        <begin position="687"/>
        <end position="692"/>
    </location>
</feature>
<feature type="helix" evidence="15">
    <location>
        <begin position="695"/>
        <end position="711"/>
    </location>
</feature>
<feature type="helix" evidence="15">
    <location>
        <begin position="732"/>
        <end position="744"/>
    </location>
</feature>
<feature type="helix" evidence="15">
    <location>
        <begin position="756"/>
        <end position="759"/>
    </location>
</feature>
<feature type="turn" evidence="15">
    <location>
        <begin position="767"/>
        <end position="769"/>
    </location>
</feature>
<feature type="strand" evidence="15">
    <location>
        <begin position="773"/>
        <end position="776"/>
    </location>
</feature>
<feature type="turn" evidence="16">
    <location>
        <begin position="777"/>
        <end position="779"/>
    </location>
</feature>
<feature type="strand" evidence="15">
    <location>
        <begin position="784"/>
        <end position="787"/>
    </location>
</feature>
<feature type="helix" evidence="15">
    <location>
        <begin position="788"/>
        <end position="790"/>
    </location>
</feature>
<feature type="strand" evidence="15">
    <location>
        <begin position="795"/>
        <end position="797"/>
    </location>
</feature>
<feature type="helix" evidence="15">
    <location>
        <begin position="800"/>
        <end position="811"/>
    </location>
</feature>
<feature type="helix" evidence="15">
    <location>
        <begin position="817"/>
        <end position="824"/>
    </location>
</feature>
<feature type="helix" evidence="15">
    <location>
        <begin position="825"/>
        <end position="827"/>
    </location>
</feature>
<feature type="helix" evidence="15">
    <location>
        <begin position="831"/>
        <end position="839"/>
    </location>
</feature>
<feature type="helix" evidence="15">
    <location>
        <begin position="842"/>
        <end position="861"/>
    </location>
</feature>
<feature type="turn" evidence="15">
    <location>
        <begin position="871"/>
        <end position="873"/>
    </location>
</feature>
<keyword id="KW-0002">3D-structure</keyword>
<keyword id="KW-0010">Activator</keyword>
<keyword id="KW-0175">Coiled coil</keyword>
<keyword id="KW-0238">DNA-binding</keyword>
<keyword id="KW-0479">Metal-binding</keyword>
<keyword id="KW-0539">Nucleus</keyword>
<keyword id="KW-0597">Phosphoprotein</keyword>
<keyword id="KW-1185">Reference proteome</keyword>
<keyword id="KW-0804">Transcription</keyword>
<keyword id="KW-0805">Transcription regulation</keyword>
<keyword id="KW-0862">Zinc</keyword>
<name>UPC2_YEAST</name>
<proteinExistence type="evidence at protein level"/>
<evidence type="ECO:0000255" key="1"/>
<evidence type="ECO:0000255" key="2">
    <source>
        <dbReference type="PROSITE-ProRule" id="PRU00227"/>
    </source>
</evidence>
<evidence type="ECO:0000256" key="3">
    <source>
        <dbReference type="SAM" id="MobiDB-lite"/>
    </source>
</evidence>
<evidence type="ECO:0000269" key="4">
    <source>
    </source>
</evidence>
<evidence type="ECO:0000269" key="5">
    <source>
    </source>
</evidence>
<evidence type="ECO:0000269" key="6">
    <source>
    </source>
</evidence>
<evidence type="ECO:0000269" key="7">
    <source>
    </source>
</evidence>
<evidence type="ECO:0000269" key="8">
    <source>
    </source>
</evidence>
<evidence type="ECO:0000269" key="9">
    <source>
    </source>
</evidence>
<evidence type="ECO:0000269" key="10">
    <source>
    </source>
</evidence>
<evidence type="ECO:0000269" key="11">
    <source>
    </source>
</evidence>
<evidence type="ECO:0000269" key="12">
    <source>
    </source>
</evidence>
<evidence type="ECO:0007744" key="13">
    <source>
    </source>
</evidence>
<evidence type="ECO:0007744" key="14">
    <source>
    </source>
</evidence>
<evidence type="ECO:0007829" key="15">
    <source>
        <dbReference type="PDB" id="4N9N"/>
    </source>
</evidence>
<evidence type="ECO:0007829" key="16">
    <source>
        <dbReference type="PDB" id="7XB5"/>
    </source>
</evidence>
<comment type="function">
    <text evidence="4 5 6 7 8">Transcription factor that is involved in activation of anaerobic genes such as DAN/TIR cell wall mannoprotein genes and YML083c. Appears to bind to anaerobic response elements (AR1) with the consensus sequence 5'-TCGTTYAG-3' present in the promoter regions of DAN/TIR genes. Involved in sterol uptake and regulation of the sterol biosynthesis. Binds to sterol regulatory elements (SRE) with the consensus sequence 5'-TCGTATA-3' present in ERG2 and ERG3 promoters. May be involved in down-regulation of CWP2 during anaerobic adaptation.</text>
</comment>
<comment type="subcellular location">
    <subcellularLocation>
        <location evidence="2 9">Nucleus</location>
    </subcellularLocation>
</comment>
<comment type="induction">
    <text evidence="4">Induced by anaerobic conditions, hypoxia and cold. Repressed by heme.</text>
</comment>
<comment type="miscellaneous">
    <text evidence="10">Present with 752 molecules/cell in log phase SD medium.</text>
</comment>
<comment type="miscellaneous">
    <text>ECM22 and UPC2 (in combination) null mutants are not viable.</text>
</comment>